<protein>
    <recommendedName>
        <fullName evidence="1">Probable cytosol aminopeptidase</fullName>
        <ecNumber evidence="1">3.4.11.1</ecNumber>
    </recommendedName>
    <alternativeName>
        <fullName evidence="1">Leucine aminopeptidase</fullName>
        <shortName evidence="1">LAP</shortName>
        <ecNumber evidence="1">3.4.11.10</ecNumber>
    </alternativeName>
    <alternativeName>
        <fullName evidence="1">Leucyl aminopeptidase</fullName>
    </alternativeName>
</protein>
<feature type="chain" id="PRO_1000098325" description="Probable cytosol aminopeptidase">
    <location>
        <begin position="1"/>
        <end position="496"/>
    </location>
</feature>
<feature type="active site" evidence="1">
    <location>
        <position position="270"/>
    </location>
</feature>
<feature type="active site" evidence="1">
    <location>
        <position position="344"/>
    </location>
</feature>
<feature type="binding site" evidence="1">
    <location>
        <position position="258"/>
    </location>
    <ligand>
        <name>Mn(2+)</name>
        <dbReference type="ChEBI" id="CHEBI:29035"/>
        <label>2</label>
    </ligand>
</feature>
<feature type="binding site" evidence="1">
    <location>
        <position position="263"/>
    </location>
    <ligand>
        <name>Mn(2+)</name>
        <dbReference type="ChEBI" id="CHEBI:29035"/>
        <label>1</label>
    </ligand>
</feature>
<feature type="binding site" evidence="1">
    <location>
        <position position="263"/>
    </location>
    <ligand>
        <name>Mn(2+)</name>
        <dbReference type="ChEBI" id="CHEBI:29035"/>
        <label>2</label>
    </ligand>
</feature>
<feature type="binding site" evidence="1">
    <location>
        <position position="281"/>
    </location>
    <ligand>
        <name>Mn(2+)</name>
        <dbReference type="ChEBI" id="CHEBI:29035"/>
        <label>2</label>
    </ligand>
</feature>
<feature type="binding site" evidence="1">
    <location>
        <position position="340"/>
    </location>
    <ligand>
        <name>Mn(2+)</name>
        <dbReference type="ChEBI" id="CHEBI:29035"/>
        <label>1</label>
    </ligand>
</feature>
<feature type="binding site" evidence="1">
    <location>
        <position position="342"/>
    </location>
    <ligand>
        <name>Mn(2+)</name>
        <dbReference type="ChEBI" id="CHEBI:29035"/>
        <label>1</label>
    </ligand>
</feature>
<feature type="binding site" evidence="1">
    <location>
        <position position="342"/>
    </location>
    <ligand>
        <name>Mn(2+)</name>
        <dbReference type="ChEBI" id="CHEBI:29035"/>
        <label>2</label>
    </ligand>
</feature>
<name>AMPA_HELPG</name>
<proteinExistence type="inferred from homology"/>
<keyword id="KW-0031">Aminopeptidase</keyword>
<keyword id="KW-0963">Cytoplasm</keyword>
<keyword id="KW-0378">Hydrolase</keyword>
<keyword id="KW-0464">Manganese</keyword>
<keyword id="KW-0479">Metal-binding</keyword>
<keyword id="KW-0645">Protease</keyword>
<keyword id="KW-1185">Reference proteome</keyword>
<comment type="function">
    <text evidence="1">Presumably involved in the processing and regular turnover of intracellular proteins. Catalyzes the removal of unsubstituted N-terminal amino acids from various peptides.</text>
</comment>
<comment type="catalytic activity">
    <reaction evidence="1">
        <text>Release of an N-terminal amino acid, Xaa-|-Yaa-, in which Xaa is preferably Leu, but may be other amino acids including Pro although not Arg or Lys, and Yaa may be Pro. Amino acid amides and methyl esters are also readily hydrolyzed, but rates on arylamides are exceedingly low.</text>
        <dbReference type="EC" id="3.4.11.1"/>
    </reaction>
</comment>
<comment type="catalytic activity">
    <reaction evidence="1">
        <text>Release of an N-terminal amino acid, preferentially leucine, but not glutamic or aspartic acids.</text>
        <dbReference type="EC" id="3.4.11.10"/>
    </reaction>
</comment>
<comment type="cofactor">
    <cofactor evidence="1">
        <name>Mn(2+)</name>
        <dbReference type="ChEBI" id="CHEBI:29035"/>
    </cofactor>
    <text evidence="1">Binds 2 manganese ions per subunit.</text>
</comment>
<comment type="subcellular location">
    <subcellularLocation>
        <location evidence="1">Cytoplasm</location>
    </subcellularLocation>
</comment>
<comment type="similarity">
    <text evidence="1">Belongs to the peptidase M17 family.</text>
</comment>
<organism>
    <name type="scientific">Helicobacter pylori (strain G27)</name>
    <dbReference type="NCBI Taxonomy" id="563041"/>
    <lineage>
        <taxon>Bacteria</taxon>
        <taxon>Pseudomonadati</taxon>
        <taxon>Campylobacterota</taxon>
        <taxon>Epsilonproteobacteria</taxon>
        <taxon>Campylobacterales</taxon>
        <taxon>Helicobacteraceae</taxon>
        <taxon>Helicobacter</taxon>
    </lineage>
</organism>
<accession>B5Z6U1</accession>
<evidence type="ECO:0000255" key="1">
    <source>
        <dbReference type="HAMAP-Rule" id="MF_00181"/>
    </source>
</evidence>
<sequence length="496" mass="54501">MLKIKLEKTTFENAKAECSLVFIVNKDFSHAWVKNKELLETFKYEGEGVFLDQENKILYAGVKEDDVHLLRESACLAVRTLKKLAFKSVKVGVYTCGTHSKDNALLENLKALFLGLKLGLYEYDTFKSNKKESVLKEAIVALELHKPCEKTCANSLEKSAKEALKYAEIMTESLNIVRDLVNTPPMIGTPVYMAEVAQKVAKENHLEIHVYDEKFLEEKKMNAFLAVNKASLGVNPPRLIHLVYKPKKAKKKIALVGKGLTYDCGGLSLKPADYMVTMKADKGGGSAVIGLLNVLAKLGVEAEVHGIIGATENMIGPAAYKPDDILISKEGKSIEVRNTDAEGRLVLADCLSYAQDLNPDVIVDFATLTGACVVGLGEFTSAIMGHNEELKNLFETSGLESGELLAKLPFNRHLKKLIESKIADVCNISSSRYGGAITAGLFLNEFIRDEFKDKWLHIDIAGPAYVEKEWDVNSFGASGAGVRACTAFVEELLKKA</sequence>
<dbReference type="EC" id="3.4.11.1" evidence="1"/>
<dbReference type="EC" id="3.4.11.10" evidence="1"/>
<dbReference type="EMBL" id="CP001173">
    <property type="protein sequence ID" value="ACI27290.1"/>
    <property type="molecule type" value="Genomic_DNA"/>
</dbReference>
<dbReference type="RefSeq" id="WP_000912904.1">
    <property type="nucleotide sequence ID" value="NC_011333.1"/>
</dbReference>
<dbReference type="SMR" id="B5Z6U1"/>
<dbReference type="MEROPS" id="M17.016"/>
<dbReference type="KEGG" id="hpg:HPG27_529"/>
<dbReference type="HOGENOM" id="CLU_013734_6_1_7"/>
<dbReference type="Proteomes" id="UP000001735">
    <property type="component" value="Chromosome"/>
</dbReference>
<dbReference type="GO" id="GO:0005737">
    <property type="term" value="C:cytoplasm"/>
    <property type="evidence" value="ECO:0007669"/>
    <property type="project" value="UniProtKB-SubCell"/>
</dbReference>
<dbReference type="GO" id="GO:0030145">
    <property type="term" value="F:manganese ion binding"/>
    <property type="evidence" value="ECO:0007669"/>
    <property type="project" value="UniProtKB-UniRule"/>
</dbReference>
<dbReference type="GO" id="GO:0070006">
    <property type="term" value="F:metalloaminopeptidase activity"/>
    <property type="evidence" value="ECO:0007669"/>
    <property type="project" value="InterPro"/>
</dbReference>
<dbReference type="GO" id="GO:0006508">
    <property type="term" value="P:proteolysis"/>
    <property type="evidence" value="ECO:0007669"/>
    <property type="project" value="UniProtKB-KW"/>
</dbReference>
<dbReference type="CDD" id="cd00433">
    <property type="entry name" value="Peptidase_M17"/>
    <property type="match status" value="1"/>
</dbReference>
<dbReference type="Gene3D" id="3.40.220.10">
    <property type="entry name" value="Leucine Aminopeptidase, subunit E, domain 1"/>
    <property type="match status" value="1"/>
</dbReference>
<dbReference type="Gene3D" id="3.40.630.10">
    <property type="entry name" value="Zn peptidases"/>
    <property type="match status" value="1"/>
</dbReference>
<dbReference type="HAMAP" id="MF_00181">
    <property type="entry name" value="Cytosol_peptidase_M17"/>
    <property type="match status" value="1"/>
</dbReference>
<dbReference type="InterPro" id="IPR011356">
    <property type="entry name" value="Leucine_aapep/pepB"/>
</dbReference>
<dbReference type="InterPro" id="IPR043472">
    <property type="entry name" value="Macro_dom-like"/>
</dbReference>
<dbReference type="InterPro" id="IPR000819">
    <property type="entry name" value="Peptidase_M17_C"/>
</dbReference>
<dbReference type="InterPro" id="IPR023042">
    <property type="entry name" value="Peptidase_M17_leu_NH2_pept"/>
</dbReference>
<dbReference type="InterPro" id="IPR008283">
    <property type="entry name" value="Peptidase_M17_N"/>
</dbReference>
<dbReference type="NCBIfam" id="NF002079">
    <property type="entry name" value="PRK00913.3-1"/>
    <property type="match status" value="1"/>
</dbReference>
<dbReference type="NCBIfam" id="NF002081">
    <property type="entry name" value="PRK00913.3-3"/>
    <property type="match status" value="1"/>
</dbReference>
<dbReference type="PANTHER" id="PTHR11963:SF23">
    <property type="entry name" value="CYTOSOL AMINOPEPTIDASE"/>
    <property type="match status" value="1"/>
</dbReference>
<dbReference type="PANTHER" id="PTHR11963">
    <property type="entry name" value="LEUCINE AMINOPEPTIDASE-RELATED"/>
    <property type="match status" value="1"/>
</dbReference>
<dbReference type="Pfam" id="PF00883">
    <property type="entry name" value="Peptidase_M17"/>
    <property type="match status" value="1"/>
</dbReference>
<dbReference type="Pfam" id="PF02789">
    <property type="entry name" value="Peptidase_M17_N"/>
    <property type="match status" value="1"/>
</dbReference>
<dbReference type="PRINTS" id="PR00481">
    <property type="entry name" value="LAMNOPPTDASE"/>
</dbReference>
<dbReference type="SUPFAM" id="SSF52949">
    <property type="entry name" value="Macro domain-like"/>
    <property type="match status" value="1"/>
</dbReference>
<dbReference type="SUPFAM" id="SSF53187">
    <property type="entry name" value="Zn-dependent exopeptidases"/>
    <property type="match status" value="1"/>
</dbReference>
<dbReference type="PROSITE" id="PS00631">
    <property type="entry name" value="CYTOSOL_AP"/>
    <property type="match status" value="1"/>
</dbReference>
<gene>
    <name evidence="1" type="primary">pepA</name>
    <name type="ordered locus">HPG27_529</name>
</gene>
<reference key="1">
    <citation type="journal article" date="2009" name="J. Bacteriol.">
        <title>The complete genome sequence of Helicobacter pylori strain G27.</title>
        <authorList>
            <person name="Baltrus D.A."/>
            <person name="Amieva M.R."/>
            <person name="Covacci A."/>
            <person name="Lowe T.M."/>
            <person name="Merrell D.S."/>
            <person name="Ottemann K.M."/>
            <person name="Stein M."/>
            <person name="Salama N.R."/>
            <person name="Guillemin K."/>
        </authorList>
    </citation>
    <scope>NUCLEOTIDE SEQUENCE [LARGE SCALE GENOMIC DNA]</scope>
    <source>
        <strain>G27</strain>
    </source>
</reference>